<keyword id="KW-0687">Ribonucleoprotein</keyword>
<keyword id="KW-0689">Ribosomal protein</keyword>
<gene>
    <name evidence="1" type="primary">rplM</name>
    <name type="ordered locus">BPP3884</name>
</gene>
<accession>Q7W3Z1</accession>
<comment type="function">
    <text evidence="1">This protein is one of the early assembly proteins of the 50S ribosomal subunit, although it is not seen to bind rRNA by itself. It is important during the early stages of 50S assembly.</text>
</comment>
<comment type="subunit">
    <text evidence="1">Part of the 50S ribosomal subunit.</text>
</comment>
<comment type="similarity">
    <text evidence="1">Belongs to the universal ribosomal protein uL13 family.</text>
</comment>
<comment type="sequence caution" evidence="2">
    <conflict type="erroneous initiation">
        <sequence resource="EMBL-CDS" id="CAE39167"/>
    </conflict>
</comment>
<feature type="chain" id="PRO_0000261693" description="Large ribosomal subunit protein uL13">
    <location>
        <begin position="1"/>
        <end position="142"/>
    </location>
</feature>
<protein>
    <recommendedName>
        <fullName evidence="1">Large ribosomal subunit protein uL13</fullName>
    </recommendedName>
    <alternativeName>
        <fullName evidence="2">50S ribosomal protein L13</fullName>
    </alternativeName>
</protein>
<name>RL13_BORPA</name>
<reference key="1">
    <citation type="journal article" date="2003" name="Nat. Genet.">
        <title>Comparative analysis of the genome sequences of Bordetella pertussis, Bordetella parapertussis and Bordetella bronchiseptica.</title>
        <authorList>
            <person name="Parkhill J."/>
            <person name="Sebaihia M."/>
            <person name="Preston A."/>
            <person name="Murphy L.D."/>
            <person name="Thomson N.R."/>
            <person name="Harris D.E."/>
            <person name="Holden M.T.G."/>
            <person name="Churcher C.M."/>
            <person name="Bentley S.D."/>
            <person name="Mungall K.L."/>
            <person name="Cerdeno-Tarraga A.-M."/>
            <person name="Temple L."/>
            <person name="James K.D."/>
            <person name="Harris B."/>
            <person name="Quail M.A."/>
            <person name="Achtman M."/>
            <person name="Atkin R."/>
            <person name="Baker S."/>
            <person name="Basham D."/>
            <person name="Bason N."/>
            <person name="Cherevach I."/>
            <person name="Chillingworth T."/>
            <person name="Collins M."/>
            <person name="Cronin A."/>
            <person name="Davis P."/>
            <person name="Doggett J."/>
            <person name="Feltwell T."/>
            <person name="Goble A."/>
            <person name="Hamlin N."/>
            <person name="Hauser H."/>
            <person name="Holroyd S."/>
            <person name="Jagels K."/>
            <person name="Leather S."/>
            <person name="Moule S."/>
            <person name="Norberczak H."/>
            <person name="O'Neil S."/>
            <person name="Ormond D."/>
            <person name="Price C."/>
            <person name="Rabbinowitsch E."/>
            <person name="Rutter S."/>
            <person name="Sanders M."/>
            <person name="Saunders D."/>
            <person name="Seeger K."/>
            <person name="Sharp S."/>
            <person name="Simmonds M."/>
            <person name="Skelton J."/>
            <person name="Squares R."/>
            <person name="Squares S."/>
            <person name="Stevens K."/>
            <person name="Unwin L."/>
            <person name="Whitehead S."/>
            <person name="Barrell B.G."/>
            <person name="Maskell D.J."/>
        </authorList>
    </citation>
    <scope>NUCLEOTIDE SEQUENCE [LARGE SCALE GENOMIC DNA]</scope>
    <source>
        <strain>12822 / ATCC BAA-587 / NCTC 13253</strain>
    </source>
</reference>
<evidence type="ECO:0000255" key="1">
    <source>
        <dbReference type="HAMAP-Rule" id="MF_01366"/>
    </source>
</evidence>
<evidence type="ECO:0000305" key="2"/>
<proteinExistence type="inferred from homology"/>
<dbReference type="EMBL" id="BX640435">
    <property type="protein sequence ID" value="CAE39167.1"/>
    <property type="status" value="ALT_INIT"/>
    <property type="molecule type" value="Genomic_DNA"/>
</dbReference>
<dbReference type="RefSeq" id="WP_010927106.1">
    <property type="nucleotide sequence ID" value="NC_002928.3"/>
</dbReference>
<dbReference type="SMR" id="Q7W3Z1"/>
<dbReference type="GeneID" id="93205684"/>
<dbReference type="KEGG" id="bpa:BPP3884"/>
<dbReference type="HOGENOM" id="CLU_082184_2_2_4"/>
<dbReference type="Proteomes" id="UP000001421">
    <property type="component" value="Chromosome"/>
</dbReference>
<dbReference type="GO" id="GO:0022625">
    <property type="term" value="C:cytosolic large ribosomal subunit"/>
    <property type="evidence" value="ECO:0007669"/>
    <property type="project" value="TreeGrafter"/>
</dbReference>
<dbReference type="GO" id="GO:0003729">
    <property type="term" value="F:mRNA binding"/>
    <property type="evidence" value="ECO:0007669"/>
    <property type="project" value="TreeGrafter"/>
</dbReference>
<dbReference type="GO" id="GO:0003735">
    <property type="term" value="F:structural constituent of ribosome"/>
    <property type="evidence" value="ECO:0007669"/>
    <property type="project" value="InterPro"/>
</dbReference>
<dbReference type="GO" id="GO:0017148">
    <property type="term" value="P:negative regulation of translation"/>
    <property type="evidence" value="ECO:0007669"/>
    <property type="project" value="TreeGrafter"/>
</dbReference>
<dbReference type="GO" id="GO:0006412">
    <property type="term" value="P:translation"/>
    <property type="evidence" value="ECO:0007669"/>
    <property type="project" value="UniProtKB-UniRule"/>
</dbReference>
<dbReference type="CDD" id="cd00392">
    <property type="entry name" value="Ribosomal_L13"/>
    <property type="match status" value="1"/>
</dbReference>
<dbReference type="FunFam" id="3.90.1180.10:FF:000001">
    <property type="entry name" value="50S ribosomal protein L13"/>
    <property type="match status" value="1"/>
</dbReference>
<dbReference type="Gene3D" id="3.90.1180.10">
    <property type="entry name" value="Ribosomal protein L13"/>
    <property type="match status" value="1"/>
</dbReference>
<dbReference type="HAMAP" id="MF_01366">
    <property type="entry name" value="Ribosomal_uL13"/>
    <property type="match status" value="1"/>
</dbReference>
<dbReference type="InterPro" id="IPR005822">
    <property type="entry name" value="Ribosomal_uL13"/>
</dbReference>
<dbReference type="InterPro" id="IPR005823">
    <property type="entry name" value="Ribosomal_uL13_bac-type"/>
</dbReference>
<dbReference type="InterPro" id="IPR036899">
    <property type="entry name" value="Ribosomal_uL13_sf"/>
</dbReference>
<dbReference type="NCBIfam" id="TIGR01066">
    <property type="entry name" value="rplM_bact"/>
    <property type="match status" value="1"/>
</dbReference>
<dbReference type="PANTHER" id="PTHR11545:SF2">
    <property type="entry name" value="LARGE RIBOSOMAL SUBUNIT PROTEIN UL13M"/>
    <property type="match status" value="1"/>
</dbReference>
<dbReference type="PANTHER" id="PTHR11545">
    <property type="entry name" value="RIBOSOMAL PROTEIN L13"/>
    <property type="match status" value="1"/>
</dbReference>
<dbReference type="Pfam" id="PF00572">
    <property type="entry name" value="Ribosomal_L13"/>
    <property type="match status" value="1"/>
</dbReference>
<dbReference type="PIRSF" id="PIRSF002181">
    <property type="entry name" value="Ribosomal_L13"/>
    <property type="match status" value="1"/>
</dbReference>
<dbReference type="SUPFAM" id="SSF52161">
    <property type="entry name" value="Ribosomal protein L13"/>
    <property type="match status" value="1"/>
</dbReference>
<sequence>MKTFVAKPHEVKRDWFVIDAKGKVLGRVASEVAHRLRGKHKPEFTPHVDTGDYIVIINAADIVVTGNKAQDKKYFRHTTYPGGIRETNFEKMQQRFPGRAIQKAVKGMLPKGPLGYAMIKKLKVYAGAEHPHTAQQPKPLEF</sequence>
<organism>
    <name type="scientific">Bordetella parapertussis (strain 12822 / ATCC BAA-587 / NCTC 13253)</name>
    <dbReference type="NCBI Taxonomy" id="257311"/>
    <lineage>
        <taxon>Bacteria</taxon>
        <taxon>Pseudomonadati</taxon>
        <taxon>Pseudomonadota</taxon>
        <taxon>Betaproteobacteria</taxon>
        <taxon>Burkholderiales</taxon>
        <taxon>Alcaligenaceae</taxon>
        <taxon>Bordetella</taxon>
    </lineage>
</organism>